<evidence type="ECO:0000255" key="1">
    <source>
        <dbReference type="HAMAP-Rule" id="MF_01820"/>
    </source>
</evidence>
<evidence type="ECO:0000255" key="2">
    <source>
        <dbReference type="PROSITE-ProRule" id="PRU01058"/>
    </source>
</evidence>
<feature type="chain" id="PRO_1000188078" description="Small ribosomal subunit biogenesis GTPase RsgA">
    <location>
        <begin position="1"/>
        <end position="326"/>
    </location>
</feature>
<feature type="domain" description="CP-type G" evidence="2">
    <location>
        <begin position="80"/>
        <end position="241"/>
    </location>
</feature>
<feature type="binding site" evidence="1">
    <location>
        <begin position="129"/>
        <end position="132"/>
    </location>
    <ligand>
        <name>GTP</name>
        <dbReference type="ChEBI" id="CHEBI:37565"/>
    </ligand>
</feature>
<feature type="binding site" evidence="1">
    <location>
        <begin position="183"/>
        <end position="191"/>
    </location>
    <ligand>
        <name>GTP</name>
        <dbReference type="ChEBI" id="CHEBI:37565"/>
    </ligand>
</feature>
<feature type="binding site" evidence="1">
    <location>
        <position position="265"/>
    </location>
    <ligand>
        <name>Zn(2+)</name>
        <dbReference type="ChEBI" id="CHEBI:29105"/>
    </ligand>
</feature>
<feature type="binding site" evidence="1">
    <location>
        <position position="270"/>
    </location>
    <ligand>
        <name>Zn(2+)</name>
        <dbReference type="ChEBI" id="CHEBI:29105"/>
    </ligand>
</feature>
<feature type="binding site" evidence="1">
    <location>
        <position position="272"/>
    </location>
    <ligand>
        <name>Zn(2+)</name>
        <dbReference type="ChEBI" id="CHEBI:29105"/>
    </ligand>
</feature>
<feature type="binding site" evidence="1">
    <location>
        <position position="278"/>
    </location>
    <ligand>
        <name>Zn(2+)</name>
        <dbReference type="ChEBI" id="CHEBI:29105"/>
    </ligand>
</feature>
<protein>
    <recommendedName>
        <fullName evidence="1">Small ribosomal subunit biogenesis GTPase RsgA</fullName>
        <ecNumber evidence="1">3.6.1.-</ecNumber>
    </recommendedName>
</protein>
<keyword id="KW-0963">Cytoplasm</keyword>
<keyword id="KW-0342">GTP-binding</keyword>
<keyword id="KW-0378">Hydrolase</keyword>
<keyword id="KW-0479">Metal-binding</keyword>
<keyword id="KW-0547">Nucleotide-binding</keyword>
<keyword id="KW-1185">Reference proteome</keyword>
<keyword id="KW-0690">Ribosome biogenesis</keyword>
<keyword id="KW-0694">RNA-binding</keyword>
<keyword id="KW-0699">rRNA-binding</keyword>
<keyword id="KW-0862">Zinc</keyword>
<organism>
    <name type="scientific">Flavobacterium psychrophilum (strain ATCC 49511 / DSM 21280 / CIP 103535 / JIP02/86)</name>
    <dbReference type="NCBI Taxonomy" id="402612"/>
    <lineage>
        <taxon>Bacteria</taxon>
        <taxon>Pseudomonadati</taxon>
        <taxon>Bacteroidota</taxon>
        <taxon>Flavobacteriia</taxon>
        <taxon>Flavobacteriales</taxon>
        <taxon>Flavobacteriaceae</taxon>
        <taxon>Flavobacterium</taxon>
    </lineage>
</organism>
<name>RSGA_FLAPJ</name>
<proteinExistence type="inferred from homology"/>
<reference key="1">
    <citation type="journal article" date="2007" name="Nat. Biotechnol.">
        <title>Complete genome sequence of the fish pathogen Flavobacterium psychrophilum.</title>
        <authorList>
            <person name="Duchaud E."/>
            <person name="Boussaha M."/>
            <person name="Loux V."/>
            <person name="Bernardet J.-F."/>
            <person name="Michel C."/>
            <person name="Kerouault B."/>
            <person name="Mondot S."/>
            <person name="Nicolas P."/>
            <person name="Bossy R."/>
            <person name="Caron C."/>
            <person name="Bessieres P."/>
            <person name="Gibrat J.-F."/>
            <person name="Claverol S."/>
            <person name="Dumetz F."/>
            <person name="Le Henaff M."/>
            <person name="Benmansour A."/>
        </authorList>
    </citation>
    <scope>NUCLEOTIDE SEQUENCE [LARGE SCALE GENOMIC DNA]</scope>
    <source>
        <strain>ATCC 49511 / DSM 21280 / CIP 103535 / JIP02/86</strain>
    </source>
</reference>
<accession>A6GW90</accession>
<sequence length="326" mass="37259">MTGIVYKSTGSWYTVKSLQGHFMECRIKGKFRMKGIKSTNPIAVGDVVDYDLDENSDVVTGTITKIHDRKNYIVRKSVNLSHQMHIIASNLDYVFLLITINNPPTTTNFIDRFLVTAQAYGIETILVFNKIDTYNEAMLDEQLFMQYIYQEIGYKCLRVSSTEGKGIEELKNIMKNKVTMFSGHSGVGKSTLVNAMEPTLHLKTKTISEQSKQGQHTTTFAEMYDLSFGAQIIDTPGIKGFGIVDMEKEEISGYFPEFFKLKDQCKFNNCLHKDEPKCAVKDALEKDKISYSRYNSYLKILEGDDETYRTDIYNDDRIASDETRNK</sequence>
<gene>
    <name evidence="1" type="primary">rsgA</name>
    <name type="ordered locus">FP0248</name>
</gene>
<dbReference type="EC" id="3.6.1.-" evidence="1"/>
<dbReference type="EMBL" id="AM398681">
    <property type="protein sequence ID" value="CAL42363.1"/>
    <property type="molecule type" value="Genomic_DNA"/>
</dbReference>
<dbReference type="RefSeq" id="WP_011962423.1">
    <property type="nucleotide sequence ID" value="NC_009613.3"/>
</dbReference>
<dbReference type="RefSeq" id="YP_001295183.1">
    <property type="nucleotide sequence ID" value="NC_009613.3"/>
</dbReference>
<dbReference type="SMR" id="A6GW90"/>
<dbReference type="STRING" id="402612.FP0248"/>
<dbReference type="EnsemblBacteria" id="CAL42363">
    <property type="protein sequence ID" value="CAL42363"/>
    <property type="gene ID" value="FP0248"/>
</dbReference>
<dbReference type="GeneID" id="66553877"/>
<dbReference type="KEGG" id="fps:FP0248"/>
<dbReference type="PATRIC" id="fig|402612.5.peg.257"/>
<dbReference type="eggNOG" id="COG1162">
    <property type="taxonomic scope" value="Bacteria"/>
</dbReference>
<dbReference type="HOGENOM" id="CLU_033617_2_0_10"/>
<dbReference type="OrthoDB" id="9809485at2"/>
<dbReference type="Proteomes" id="UP000006394">
    <property type="component" value="Chromosome"/>
</dbReference>
<dbReference type="GO" id="GO:0005737">
    <property type="term" value="C:cytoplasm"/>
    <property type="evidence" value="ECO:0007669"/>
    <property type="project" value="UniProtKB-SubCell"/>
</dbReference>
<dbReference type="GO" id="GO:0005525">
    <property type="term" value="F:GTP binding"/>
    <property type="evidence" value="ECO:0007669"/>
    <property type="project" value="UniProtKB-UniRule"/>
</dbReference>
<dbReference type="GO" id="GO:0003924">
    <property type="term" value="F:GTPase activity"/>
    <property type="evidence" value="ECO:0007669"/>
    <property type="project" value="UniProtKB-UniRule"/>
</dbReference>
<dbReference type="GO" id="GO:0046872">
    <property type="term" value="F:metal ion binding"/>
    <property type="evidence" value="ECO:0007669"/>
    <property type="project" value="UniProtKB-KW"/>
</dbReference>
<dbReference type="GO" id="GO:0019843">
    <property type="term" value="F:rRNA binding"/>
    <property type="evidence" value="ECO:0007669"/>
    <property type="project" value="UniProtKB-KW"/>
</dbReference>
<dbReference type="GO" id="GO:0042274">
    <property type="term" value="P:ribosomal small subunit biogenesis"/>
    <property type="evidence" value="ECO:0007669"/>
    <property type="project" value="UniProtKB-UniRule"/>
</dbReference>
<dbReference type="CDD" id="cd04466">
    <property type="entry name" value="S1_YloQ_GTPase"/>
    <property type="match status" value="1"/>
</dbReference>
<dbReference type="CDD" id="cd01854">
    <property type="entry name" value="YjeQ_EngC"/>
    <property type="match status" value="1"/>
</dbReference>
<dbReference type="Gene3D" id="2.40.50.140">
    <property type="entry name" value="Nucleic acid-binding proteins"/>
    <property type="match status" value="1"/>
</dbReference>
<dbReference type="Gene3D" id="3.40.50.300">
    <property type="entry name" value="P-loop containing nucleotide triphosphate hydrolases"/>
    <property type="match status" value="1"/>
</dbReference>
<dbReference type="Gene3D" id="1.10.40.50">
    <property type="entry name" value="Probable gtpase engc, domain 3"/>
    <property type="match status" value="1"/>
</dbReference>
<dbReference type="HAMAP" id="MF_01820">
    <property type="entry name" value="GTPase_RsgA"/>
    <property type="match status" value="1"/>
</dbReference>
<dbReference type="InterPro" id="IPR030378">
    <property type="entry name" value="G_CP_dom"/>
</dbReference>
<dbReference type="InterPro" id="IPR012340">
    <property type="entry name" value="NA-bd_OB-fold"/>
</dbReference>
<dbReference type="InterPro" id="IPR027417">
    <property type="entry name" value="P-loop_NTPase"/>
</dbReference>
<dbReference type="InterPro" id="IPR004881">
    <property type="entry name" value="Ribosome_biogen_GTPase_RsgA"/>
</dbReference>
<dbReference type="InterPro" id="IPR010914">
    <property type="entry name" value="RsgA_GTPase_dom"/>
</dbReference>
<dbReference type="InterPro" id="IPR031944">
    <property type="entry name" value="RsgA_N"/>
</dbReference>
<dbReference type="NCBIfam" id="TIGR00157">
    <property type="entry name" value="ribosome small subunit-dependent GTPase A"/>
    <property type="match status" value="1"/>
</dbReference>
<dbReference type="PANTHER" id="PTHR32120">
    <property type="entry name" value="SMALL RIBOSOMAL SUBUNIT BIOGENESIS GTPASE RSGA"/>
    <property type="match status" value="1"/>
</dbReference>
<dbReference type="PANTHER" id="PTHR32120:SF11">
    <property type="entry name" value="SMALL RIBOSOMAL SUBUNIT BIOGENESIS GTPASE RSGA 1, MITOCHONDRIAL-RELATED"/>
    <property type="match status" value="1"/>
</dbReference>
<dbReference type="Pfam" id="PF03193">
    <property type="entry name" value="RsgA_GTPase"/>
    <property type="match status" value="1"/>
</dbReference>
<dbReference type="Pfam" id="PF16745">
    <property type="entry name" value="RsgA_N"/>
    <property type="match status" value="1"/>
</dbReference>
<dbReference type="SUPFAM" id="SSF50249">
    <property type="entry name" value="Nucleic acid-binding proteins"/>
    <property type="match status" value="1"/>
</dbReference>
<dbReference type="SUPFAM" id="SSF52540">
    <property type="entry name" value="P-loop containing nucleoside triphosphate hydrolases"/>
    <property type="match status" value="1"/>
</dbReference>
<dbReference type="PROSITE" id="PS50936">
    <property type="entry name" value="ENGC_GTPASE"/>
    <property type="match status" value="1"/>
</dbReference>
<dbReference type="PROSITE" id="PS51721">
    <property type="entry name" value="G_CP"/>
    <property type="match status" value="1"/>
</dbReference>
<comment type="function">
    <text evidence="1">One of several proteins that assist in the late maturation steps of the functional core of the 30S ribosomal subunit. Helps release RbfA from mature subunits. May play a role in the assembly of ribosomal proteins into the subunit. Circularly permuted GTPase that catalyzes slow GTP hydrolysis, GTPase activity is stimulated by the 30S ribosomal subunit.</text>
</comment>
<comment type="cofactor">
    <cofactor evidence="1">
        <name>Zn(2+)</name>
        <dbReference type="ChEBI" id="CHEBI:29105"/>
    </cofactor>
    <text evidence="1">Binds 1 zinc ion per subunit.</text>
</comment>
<comment type="subunit">
    <text evidence="1">Monomer. Associates with 30S ribosomal subunit, binds 16S rRNA.</text>
</comment>
<comment type="subcellular location">
    <subcellularLocation>
        <location evidence="1">Cytoplasm</location>
    </subcellularLocation>
</comment>
<comment type="similarity">
    <text evidence="1">Belongs to the TRAFAC class YlqF/YawG GTPase family. RsgA subfamily.</text>
</comment>